<keyword id="KW-0007">Acetylation</keyword>
<keyword id="KW-0963">Cytoplasm</keyword>
<keyword id="KW-1017">Isopeptide bond</keyword>
<keyword id="KW-0507">mRNA processing</keyword>
<keyword id="KW-0508">mRNA splicing</keyword>
<keyword id="KW-0539">Nucleus</keyword>
<keyword id="KW-1185">Reference proteome</keyword>
<keyword id="KW-0678">Repressor</keyword>
<keyword id="KW-0804">Transcription</keyword>
<keyword id="KW-0805">Transcription regulation</keyword>
<keyword id="KW-0832">Ubl conjugation</keyword>
<name>SAP18_BOVIN</name>
<feature type="initiator methionine" description="Removed" evidence="2">
    <location>
        <position position="1"/>
    </location>
</feature>
<feature type="chain" id="PRO_0000245462" description="Histone deacetylase complex subunit SAP18">
    <location>
        <begin position="2"/>
        <end position="153"/>
    </location>
</feature>
<feature type="region of interest" description="Disordered" evidence="3">
    <location>
        <begin position="1"/>
        <end position="20"/>
    </location>
</feature>
<feature type="region of interest" description="Involved in splicing regulation activity" evidence="1">
    <location>
        <begin position="93"/>
        <end position="153"/>
    </location>
</feature>
<feature type="compositionally biased region" description="Basic and acidic residues" evidence="3">
    <location>
        <begin position="7"/>
        <end position="20"/>
    </location>
</feature>
<feature type="modified residue" description="N-acetylalanine" evidence="2">
    <location>
        <position position="2"/>
    </location>
</feature>
<feature type="cross-link" description="Glycyl lysine isopeptide (Lys-Gly) (interchain with G-Cter in SUMO2)" evidence="2">
    <location>
        <position position="13"/>
    </location>
</feature>
<dbReference type="EMBL" id="BC102603">
    <property type="protein sequence ID" value="AAI02604.1"/>
    <property type="molecule type" value="mRNA"/>
</dbReference>
<dbReference type="RefSeq" id="NP_001030544.2">
    <property type="nucleotide sequence ID" value="NM_001035467.2"/>
</dbReference>
<dbReference type="BMRB" id="Q3T022"/>
<dbReference type="SMR" id="Q3T022"/>
<dbReference type="FunCoup" id="Q3T022">
    <property type="interactions" value="2771"/>
</dbReference>
<dbReference type="STRING" id="9913.ENSBTAP00000024791"/>
<dbReference type="PaxDb" id="9913-ENSBTAP00000024791"/>
<dbReference type="GeneID" id="615692"/>
<dbReference type="KEGG" id="bta:615692"/>
<dbReference type="CTD" id="10284"/>
<dbReference type="eggNOG" id="KOG3391">
    <property type="taxonomic scope" value="Eukaryota"/>
</dbReference>
<dbReference type="HOGENOM" id="CLU_108681_0_1_1"/>
<dbReference type="InParanoid" id="Q3T022"/>
<dbReference type="OrthoDB" id="440566at2759"/>
<dbReference type="Proteomes" id="UP000009136">
    <property type="component" value="Unplaced"/>
</dbReference>
<dbReference type="GO" id="GO:0061574">
    <property type="term" value="C:ASAP complex"/>
    <property type="evidence" value="ECO:0000250"/>
    <property type="project" value="UniProtKB"/>
</dbReference>
<dbReference type="GO" id="GO:0005737">
    <property type="term" value="C:cytoplasm"/>
    <property type="evidence" value="ECO:0007669"/>
    <property type="project" value="UniProtKB-SubCell"/>
</dbReference>
<dbReference type="GO" id="GO:0016607">
    <property type="term" value="C:nuclear speck"/>
    <property type="evidence" value="ECO:0000250"/>
    <property type="project" value="UniProtKB"/>
</dbReference>
<dbReference type="GO" id="GO:0005634">
    <property type="term" value="C:nucleus"/>
    <property type="evidence" value="ECO:0000318"/>
    <property type="project" value="GO_Central"/>
</dbReference>
<dbReference type="GO" id="GO:0003714">
    <property type="term" value="F:transcription corepressor activity"/>
    <property type="evidence" value="ECO:0000318"/>
    <property type="project" value="GO_Central"/>
</dbReference>
<dbReference type="GO" id="GO:0006397">
    <property type="term" value="P:mRNA processing"/>
    <property type="evidence" value="ECO:0007669"/>
    <property type="project" value="UniProtKB-KW"/>
</dbReference>
<dbReference type="GO" id="GO:0045892">
    <property type="term" value="P:negative regulation of DNA-templated transcription"/>
    <property type="evidence" value="ECO:0000318"/>
    <property type="project" value="GO_Central"/>
</dbReference>
<dbReference type="GO" id="GO:0048025">
    <property type="term" value="P:negative regulation of mRNA splicing, via spliceosome"/>
    <property type="evidence" value="ECO:0000250"/>
    <property type="project" value="UniProtKB"/>
</dbReference>
<dbReference type="GO" id="GO:0043065">
    <property type="term" value="P:positive regulation of apoptotic process"/>
    <property type="evidence" value="ECO:0000250"/>
    <property type="project" value="UniProtKB"/>
</dbReference>
<dbReference type="GO" id="GO:0000381">
    <property type="term" value="P:regulation of alternative mRNA splicing, via spliceosome"/>
    <property type="evidence" value="ECO:0000250"/>
    <property type="project" value="UniProtKB"/>
</dbReference>
<dbReference type="GO" id="GO:0008380">
    <property type="term" value="P:RNA splicing"/>
    <property type="evidence" value="ECO:0007669"/>
    <property type="project" value="UniProtKB-KW"/>
</dbReference>
<dbReference type="FunFam" id="3.10.20.550:FF:000001">
    <property type="entry name" value="Histone deacetylase complex subunit SAP18"/>
    <property type="match status" value="1"/>
</dbReference>
<dbReference type="Gene3D" id="3.10.20.550">
    <property type="entry name" value="ASAP complex, SAP18 subunit"/>
    <property type="match status" value="1"/>
</dbReference>
<dbReference type="InterPro" id="IPR017250">
    <property type="entry name" value="Hist_deAcase_cplx_SAP18"/>
</dbReference>
<dbReference type="InterPro" id="IPR010516">
    <property type="entry name" value="SAP18"/>
</dbReference>
<dbReference type="InterPro" id="IPR042534">
    <property type="entry name" value="SAP18_sf"/>
</dbReference>
<dbReference type="PANTHER" id="PTHR13082:SF0">
    <property type="entry name" value="HISTONE DEACETYLASE COMPLEX SUBUNIT SAP18"/>
    <property type="match status" value="1"/>
</dbReference>
<dbReference type="PANTHER" id="PTHR13082">
    <property type="entry name" value="SAP18"/>
    <property type="match status" value="1"/>
</dbReference>
<dbReference type="Pfam" id="PF06487">
    <property type="entry name" value="SAP18"/>
    <property type="match status" value="1"/>
</dbReference>
<dbReference type="PIRSF" id="PIRSF037637">
    <property type="entry name" value="HDAC_SAP18"/>
    <property type="match status" value="1"/>
</dbReference>
<sequence length="153" mass="17579">MAVESRVTQEEIKKEPEKPIDREKTCPLLLRVFTTNNGRHHRMDEFSRGNVPSSELQIYTWMDATLKELTSLVKEVYPEARKKGTHFNFAIVFTDLKRPGYRVKEIGSTMSGRKGTDDSMTLQSQKFQIGDYLDIAITPPNRAPPTSGRMRPY</sequence>
<accession>Q3T022</accession>
<gene>
    <name type="primary">SAP18</name>
</gene>
<reference key="1">
    <citation type="submission" date="2005-08" db="EMBL/GenBank/DDBJ databases">
        <authorList>
            <consortium name="NIH - Mammalian Gene Collection (MGC) project"/>
        </authorList>
    </citation>
    <scope>NUCLEOTIDE SEQUENCE [LARGE SCALE MRNA]</scope>
    <source>
        <strain>Crossbred X Angus</strain>
        <tissue>Liver</tissue>
    </source>
</reference>
<proteinExistence type="evidence at transcript level"/>
<evidence type="ECO:0000250" key="1"/>
<evidence type="ECO:0000250" key="2">
    <source>
        <dbReference type="UniProtKB" id="O00422"/>
    </source>
</evidence>
<evidence type="ECO:0000256" key="3">
    <source>
        <dbReference type="SAM" id="MobiDB-lite"/>
    </source>
</evidence>
<evidence type="ECO:0000305" key="4"/>
<protein>
    <recommendedName>
        <fullName>Histone deacetylase complex subunit SAP18</fullName>
    </recommendedName>
    <alternativeName>
        <fullName>18 kDa Sin3-associated polypeptide</fullName>
    </alternativeName>
    <alternativeName>
        <fullName>Sin3-associated polypeptide p18</fullName>
    </alternativeName>
</protein>
<comment type="function">
    <text evidence="1">Component of the SIN3-repressing complex. Enhances the ability of SIN3-HDAC1-mediated transcriptional repression. When tethered to the promoter, it can direct the formation of a repressive complex to core histone proteins. Auxiliary component of the splicing-dependent multiprotein exon junction complex (EJC) deposited at splice junction on mRNAs. The EJC is a dynamic structure consisting of core proteins and several peripheral nuclear and cytoplasmic associated factors that join the complex only transiently either during EJC assembly or during subsequent mRNA metabolism. Component of the ASAP and PSAP complexes which bind RNA in a sequence-independent manner and are proposed to be recruited to the EJC prior to or during the splicing process and to regulate specific excision of introns in specific transcription subsets. The ASAP complex can inhibit mRNA processing during in vitro splicing reactions. The ASAP complex promotes apoptosis and is disassembled after induction of apoptosis. Involved in the splicing modulation of BCL2L1/Bcl-X (and probably other apoptotic genes); specifically inhibits the formation of proapoptotic isoforms such as Bcl-X(S); the activity is different from the established EJC assembly and function (By similarity).</text>
</comment>
<comment type="subunit">
    <text evidence="1">Found in a mRNA splicing-dependent exon junction complex (EJC). Component of the heterotrimeric ASAP (apoptosis- and splicing-associated protein) and PSAP complexes consisting of RNPS1, SAP18 and either ACIN1 or PNN, respectively; the ASAP and PSAP complexes probably are formed mutually exclusive. For the ASAP complex, the association of SAP18 seems to require a preformed RNPS1:ACIN1 complex. Forms a complex with SIN3A and HDAC1. Interacts with SUFU (By similarity).</text>
</comment>
<comment type="subcellular location">
    <subcellularLocation>
        <location evidence="2">Nucleus</location>
    </subcellularLocation>
    <subcellularLocation>
        <location evidence="2">Cytoplasm</location>
    </subcellularLocation>
    <subcellularLocation>
        <location evidence="2">Nucleus speckle</location>
    </subcellularLocation>
    <text evidence="2">Shuttles between the nucleus and the cytoplasm (By similarity). Colocalizes with ACIN1 and SRSF2 in nuclear speckles (By similarity).</text>
</comment>
<comment type="similarity">
    <text evidence="4">Belongs to the SAP18 family.</text>
</comment>
<organism>
    <name type="scientific">Bos taurus</name>
    <name type="common">Bovine</name>
    <dbReference type="NCBI Taxonomy" id="9913"/>
    <lineage>
        <taxon>Eukaryota</taxon>
        <taxon>Metazoa</taxon>
        <taxon>Chordata</taxon>
        <taxon>Craniata</taxon>
        <taxon>Vertebrata</taxon>
        <taxon>Euteleostomi</taxon>
        <taxon>Mammalia</taxon>
        <taxon>Eutheria</taxon>
        <taxon>Laurasiatheria</taxon>
        <taxon>Artiodactyla</taxon>
        <taxon>Ruminantia</taxon>
        <taxon>Pecora</taxon>
        <taxon>Bovidae</taxon>
        <taxon>Bovinae</taxon>
        <taxon>Bos</taxon>
    </lineage>
</organism>